<accession>A7NAM4</accession>
<feature type="chain" id="PRO_1000007238" description="Large ribosomal subunit protein bL28">
    <location>
        <begin position="1"/>
        <end position="78"/>
    </location>
</feature>
<protein>
    <recommendedName>
        <fullName evidence="1">Large ribosomal subunit protein bL28</fullName>
    </recommendedName>
    <alternativeName>
        <fullName evidence="2">50S ribosomal protein L28</fullName>
    </alternativeName>
</protein>
<comment type="similarity">
    <text evidence="1">Belongs to the bacterial ribosomal protein bL28 family.</text>
</comment>
<reference key="1">
    <citation type="journal article" date="2009" name="PLoS ONE">
        <title>Complete genome sequence of Francisella tularensis subspecies holarctica FTNF002-00.</title>
        <authorList>
            <person name="Barabote R.D."/>
            <person name="Xie G."/>
            <person name="Brettin T.S."/>
            <person name="Hinrichs S.H."/>
            <person name="Fey P.D."/>
            <person name="Jay J.J."/>
            <person name="Engle J.L."/>
            <person name="Godbole S.D."/>
            <person name="Noronha J.M."/>
            <person name="Scheuermann R.H."/>
            <person name="Zhou L.W."/>
            <person name="Lion C."/>
            <person name="Dempsey M.P."/>
        </authorList>
    </citation>
    <scope>NUCLEOTIDE SEQUENCE [LARGE SCALE GENOMIC DNA]</scope>
    <source>
        <strain>FTNF002-00 / FTA</strain>
    </source>
</reference>
<dbReference type="EMBL" id="CP000803">
    <property type="protein sequence ID" value="ABU61027.1"/>
    <property type="molecule type" value="Genomic_DNA"/>
</dbReference>
<dbReference type="RefSeq" id="WP_003014822.1">
    <property type="nucleotide sequence ID" value="NC_009749.1"/>
</dbReference>
<dbReference type="SMR" id="A7NAM4"/>
<dbReference type="GeneID" id="75264165"/>
<dbReference type="KEGG" id="fta:FTA_0551"/>
<dbReference type="HOGENOM" id="CLU_064548_3_1_6"/>
<dbReference type="GO" id="GO:0022625">
    <property type="term" value="C:cytosolic large ribosomal subunit"/>
    <property type="evidence" value="ECO:0007669"/>
    <property type="project" value="TreeGrafter"/>
</dbReference>
<dbReference type="GO" id="GO:0003735">
    <property type="term" value="F:structural constituent of ribosome"/>
    <property type="evidence" value="ECO:0007669"/>
    <property type="project" value="InterPro"/>
</dbReference>
<dbReference type="GO" id="GO:0006412">
    <property type="term" value="P:translation"/>
    <property type="evidence" value="ECO:0007669"/>
    <property type="project" value="UniProtKB-UniRule"/>
</dbReference>
<dbReference type="FunFam" id="2.30.170.40:FF:000001">
    <property type="entry name" value="50S ribosomal protein L28"/>
    <property type="match status" value="1"/>
</dbReference>
<dbReference type="Gene3D" id="2.30.170.40">
    <property type="entry name" value="Ribosomal protein L28/L24"/>
    <property type="match status" value="1"/>
</dbReference>
<dbReference type="HAMAP" id="MF_00373">
    <property type="entry name" value="Ribosomal_bL28"/>
    <property type="match status" value="1"/>
</dbReference>
<dbReference type="InterPro" id="IPR026569">
    <property type="entry name" value="Ribosomal_bL28"/>
</dbReference>
<dbReference type="InterPro" id="IPR034704">
    <property type="entry name" value="Ribosomal_bL28/bL31-like_sf"/>
</dbReference>
<dbReference type="InterPro" id="IPR001383">
    <property type="entry name" value="Ribosomal_bL28_bact-type"/>
</dbReference>
<dbReference type="InterPro" id="IPR037147">
    <property type="entry name" value="Ribosomal_bL28_sf"/>
</dbReference>
<dbReference type="NCBIfam" id="TIGR00009">
    <property type="entry name" value="L28"/>
    <property type="match status" value="1"/>
</dbReference>
<dbReference type="PANTHER" id="PTHR13528">
    <property type="entry name" value="39S RIBOSOMAL PROTEIN L28, MITOCHONDRIAL"/>
    <property type="match status" value="1"/>
</dbReference>
<dbReference type="PANTHER" id="PTHR13528:SF2">
    <property type="entry name" value="LARGE RIBOSOMAL SUBUNIT PROTEIN BL28M"/>
    <property type="match status" value="1"/>
</dbReference>
<dbReference type="Pfam" id="PF00830">
    <property type="entry name" value="Ribosomal_L28"/>
    <property type="match status" value="1"/>
</dbReference>
<dbReference type="SUPFAM" id="SSF143800">
    <property type="entry name" value="L28p-like"/>
    <property type="match status" value="1"/>
</dbReference>
<gene>
    <name evidence="1" type="primary">rpmB</name>
    <name type="ordered locus">FTA_0551</name>
</gene>
<evidence type="ECO:0000255" key="1">
    <source>
        <dbReference type="HAMAP-Rule" id="MF_00373"/>
    </source>
</evidence>
<evidence type="ECO:0000305" key="2"/>
<organism>
    <name type="scientific">Francisella tularensis subsp. holarctica (strain FTNF002-00 / FTA)</name>
    <dbReference type="NCBI Taxonomy" id="458234"/>
    <lineage>
        <taxon>Bacteria</taxon>
        <taxon>Pseudomonadati</taxon>
        <taxon>Pseudomonadota</taxon>
        <taxon>Gammaproteobacteria</taxon>
        <taxon>Thiotrichales</taxon>
        <taxon>Francisellaceae</taxon>
        <taxon>Francisella</taxon>
    </lineage>
</organism>
<name>RL28_FRATF</name>
<proteinExistence type="inferred from homology"/>
<sequence>MSKVCIVTGKRPATGNNVSHAQNKTKRRFLPNLHAHRFWVESENRYIKLRVSSKGMRIIDKKGIDTVLSDLRAQGHKI</sequence>
<keyword id="KW-0687">Ribonucleoprotein</keyword>
<keyword id="KW-0689">Ribosomal protein</keyword>